<accession>Q0HJ99</accession>
<organism>
    <name type="scientific">Shewanella sp. (strain MR-4)</name>
    <dbReference type="NCBI Taxonomy" id="60480"/>
    <lineage>
        <taxon>Bacteria</taxon>
        <taxon>Pseudomonadati</taxon>
        <taxon>Pseudomonadota</taxon>
        <taxon>Gammaproteobacteria</taxon>
        <taxon>Alteromonadales</taxon>
        <taxon>Shewanellaceae</taxon>
        <taxon>Shewanella</taxon>
    </lineage>
</organism>
<name>HIS6_SHESM</name>
<keyword id="KW-0028">Amino-acid biosynthesis</keyword>
<keyword id="KW-0963">Cytoplasm</keyword>
<keyword id="KW-0368">Histidine biosynthesis</keyword>
<keyword id="KW-0456">Lyase</keyword>
<protein>
    <recommendedName>
        <fullName evidence="1">Imidazole glycerol phosphate synthase subunit HisF</fullName>
        <ecNumber evidence="1">4.3.2.10</ecNumber>
    </recommendedName>
    <alternativeName>
        <fullName evidence="1">IGP synthase cyclase subunit</fullName>
    </alternativeName>
    <alternativeName>
        <fullName evidence="1">IGP synthase subunit HisF</fullName>
    </alternativeName>
    <alternativeName>
        <fullName evidence="1">ImGP synthase subunit HisF</fullName>
        <shortName evidence="1">IGPS subunit HisF</shortName>
    </alternativeName>
</protein>
<comment type="function">
    <text evidence="1">IGPS catalyzes the conversion of PRFAR and glutamine to IGP, AICAR and glutamate. The HisF subunit catalyzes the cyclization activity that produces IGP and AICAR from PRFAR using the ammonia provided by the HisH subunit.</text>
</comment>
<comment type="catalytic activity">
    <reaction evidence="1">
        <text>5-[(5-phospho-1-deoxy-D-ribulos-1-ylimino)methylamino]-1-(5-phospho-beta-D-ribosyl)imidazole-4-carboxamide + L-glutamine = D-erythro-1-(imidazol-4-yl)glycerol 3-phosphate + 5-amino-1-(5-phospho-beta-D-ribosyl)imidazole-4-carboxamide + L-glutamate + H(+)</text>
        <dbReference type="Rhea" id="RHEA:24793"/>
        <dbReference type="ChEBI" id="CHEBI:15378"/>
        <dbReference type="ChEBI" id="CHEBI:29985"/>
        <dbReference type="ChEBI" id="CHEBI:58278"/>
        <dbReference type="ChEBI" id="CHEBI:58359"/>
        <dbReference type="ChEBI" id="CHEBI:58475"/>
        <dbReference type="ChEBI" id="CHEBI:58525"/>
        <dbReference type="EC" id="4.3.2.10"/>
    </reaction>
</comment>
<comment type="pathway">
    <text evidence="1">Amino-acid biosynthesis; L-histidine biosynthesis; L-histidine from 5-phospho-alpha-D-ribose 1-diphosphate: step 5/9.</text>
</comment>
<comment type="subunit">
    <text evidence="1">Heterodimer of HisH and HisF.</text>
</comment>
<comment type="subcellular location">
    <subcellularLocation>
        <location evidence="1">Cytoplasm</location>
    </subcellularLocation>
</comment>
<comment type="similarity">
    <text evidence="1">Belongs to the HisA/HisF family.</text>
</comment>
<feature type="chain" id="PRO_1000063149" description="Imidazole glycerol phosphate synthase subunit HisF">
    <location>
        <begin position="1"/>
        <end position="257"/>
    </location>
</feature>
<feature type="active site" evidence="1">
    <location>
        <position position="11"/>
    </location>
</feature>
<feature type="active site" evidence="1">
    <location>
        <position position="130"/>
    </location>
</feature>
<evidence type="ECO:0000255" key="1">
    <source>
        <dbReference type="HAMAP-Rule" id="MF_01013"/>
    </source>
</evidence>
<dbReference type="EC" id="4.3.2.10" evidence="1"/>
<dbReference type="EMBL" id="CP000446">
    <property type="protein sequence ID" value="ABI38868.1"/>
    <property type="molecule type" value="Genomic_DNA"/>
</dbReference>
<dbReference type="RefSeq" id="WP_011622565.1">
    <property type="nucleotide sequence ID" value="NC_008321.1"/>
</dbReference>
<dbReference type="SMR" id="Q0HJ99"/>
<dbReference type="GeneID" id="94727797"/>
<dbReference type="KEGG" id="she:Shewmr4_1794"/>
<dbReference type="HOGENOM" id="CLU_048577_4_0_6"/>
<dbReference type="UniPathway" id="UPA00031">
    <property type="reaction ID" value="UER00010"/>
</dbReference>
<dbReference type="GO" id="GO:0005737">
    <property type="term" value="C:cytoplasm"/>
    <property type="evidence" value="ECO:0007669"/>
    <property type="project" value="UniProtKB-SubCell"/>
</dbReference>
<dbReference type="GO" id="GO:0000107">
    <property type="term" value="F:imidazoleglycerol-phosphate synthase activity"/>
    <property type="evidence" value="ECO:0007669"/>
    <property type="project" value="UniProtKB-UniRule"/>
</dbReference>
<dbReference type="GO" id="GO:0016829">
    <property type="term" value="F:lyase activity"/>
    <property type="evidence" value="ECO:0007669"/>
    <property type="project" value="UniProtKB-KW"/>
</dbReference>
<dbReference type="GO" id="GO:0000105">
    <property type="term" value="P:L-histidine biosynthetic process"/>
    <property type="evidence" value="ECO:0007669"/>
    <property type="project" value="UniProtKB-UniRule"/>
</dbReference>
<dbReference type="CDD" id="cd04731">
    <property type="entry name" value="HisF"/>
    <property type="match status" value="1"/>
</dbReference>
<dbReference type="FunFam" id="3.20.20.70:FF:000006">
    <property type="entry name" value="Imidazole glycerol phosphate synthase subunit HisF"/>
    <property type="match status" value="1"/>
</dbReference>
<dbReference type="Gene3D" id="3.20.20.70">
    <property type="entry name" value="Aldolase class I"/>
    <property type="match status" value="1"/>
</dbReference>
<dbReference type="HAMAP" id="MF_01013">
    <property type="entry name" value="HisF"/>
    <property type="match status" value="1"/>
</dbReference>
<dbReference type="InterPro" id="IPR013785">
    <property type="entry name" value="Aldolase_TIM"/>
</dbReference>
<dbReference type="InterPro" id="IPR006062">
    <property type="entry name" value="His_biosynth"/>
</dbReference>
<dbReference type="InterPro" id="IPR004651">
    <property type="entry name" value="HisF"/>
</dbReference>
<dbReference type="InterPro" id="IPR050064">
    <property type="entry name" value="IGPS_HisA/HisF"/>
</dbReference>
<dbReference type="InterPro" id="IPR011060">
    <property type="entry name" value="RibuloseP-bd_barrel"/>
</dbReference>
<dbReference type="NCBIfam" id="TIGR00735">
    <property type="entry name" value="hisF"/>
    <property type="match status" value="1"/>
</dbReference>
<dbReference type="PANTHER" id="PTHR21235:SF2">
    <property type="entry name" value="IMIDAZOLE GLYCEROL PHOSPHATE SYNTHASE HISHF"/>
    <property type="match status" value="1"/>
</dbReference>
<dbReference type="PANTHER" id="PTHR21235">
    <property type="entry name" value="IMIDAZOLE GLYCEROL PHOSPHATE SYNTHASE SUBUNIT HISF/H IGP SYNTHASE SUBUNIT HISF/H"/>
    <property type="match status" value="1"/>
</dbReference>
<dbReference type="Pfam" id="PF00977">
    <property type="entry name" value="His_biosynth"/>
    <property type="match status" value="1"/>
</dbReference>
<dbReference type="SUPFAM" id="SSF51366">
    <property type="entry name" value="Ribulose-phoshate binding barrel"/>
    <property type="match status" value="1"/>
</dbReference>
<reference key="1">
    <citation type="submission" date="2006-08" db="EMBL/GenBank/DDBJ databases">
        <title>Complete sequence of Shewanella sp. MR-4.</title>
        <authorList>
            <consortium name="US DOE Joint Genome Institute"/>
            <person name="Copeland A."/>
            <person name="Lucas S."/>
            <person name="Lapidus A."/>
            <person name="Barry K."/>
            <person name="Detter J.C."/>
            <person name="Glavina del Rio T."/>
            <person name="Hammon N."/>
            <person name="Israni S."/>
            <person name="Dalin E."/>
            <person name="Tice H."/>
            <person name="Pitluck S."/>
            <person name="Kiss H."/>
            <person name="Brettin T."/>
            <person name="Bruce D."/>
            <person name="Han C."/>
            <person name="Tapia R."/>
            <person name="Gilna P."/>
            <person name="Schmutz J."/>
            <person name="Larimer F."/>
            <person name="Land M."/>
            <person name="Hauser L."/>
            <person name="Kyrpides N."/>
            <person name="Mikhailova N."/>
            <person name="Nealson K."/>
            <person name="Konstantinidis K."/>
            <person name="Klappenbach J."/>
            <person name="Tiedje J."/>
            <person name="Richardson P."/>
        </authorList>
    </citation>
    <scope>NUCLEOTIDE SEQUENCE [LARGE SCALE GENOMIC DNA]</scope>
    <source>
        <strain>MR-4</strain>
    </source>
</reference>
<gene>
    <name evidence="1" type="primary">hisF</name>
    <name type="ordered locus">Shewmr4_1794</name>
</gene>
<sequence>MLAKRIVPCLDVKDGCVVKGVQFRNHEIVGDIVPLAARYAAEGADELVFYDITASAHDRVVDKSWVSRVAEQIDIPFCVAGGIKTIGQARELLAFGADKISVNSPALSDPSLISRLQDEFGRQCIVIGIDSFYDAASDSYKVKQFTGDEAATKETAWYTQDWVEEVQKRGCGEIVLNVMNQDGVRGGYDIKQLSLVRQLCDVPLIASGGAGTMAHFRDVFIEAKVDAALAASVFHKAIINIGELKQYLAAEGIAIRQ</sequence>
<proteinExistence type="inferred from homology"/>